<organism>
    <name type="scientific">Chlorobaculum tepidum (strain ATCC 49652 / DSM 12025 / NBRC 103806 / TLS)</name>
    <name type="common">Chlorobium tepidum</name>
    <dbReference type="NCBI Taxonomy" id="194439"/>
    <lineage>
        <taxon>Bacteria</taxon>
        <taxon>Pseudomonadati</taxon>
        <taxon>Chlorobiota</taxon>
        <taxon>Chlorobiia</taxon>
        <taxon>Chlorobiales</taxon>
        <taxon>Chlorobiaceae</taxon>
        <taxon>Chlorobaculum</taxon>
    </lineage>
</organism>
<protein>
    <recommendedName>
        <fullName>Chlorosome protein I</fullName>
    </recommendedName>
</protein>
<name>CSMI_CHLTE</name>
<dbReference type="EMBL" id="AF060079">
    <property type="protein sequence ID" value="AAC14875.1"/>
    <property type="molecule type" value="Genomic_DNA"/>
</dbReference>
<dbReference type="EMBL" id="AE006470">
    <property type="protein sequence ID" value="AAM72611.1"/>
    <property type="molecule type" value="Genomic_DNA"/>
</dbReference>
<dbReference type="RefSeq" id="NP_662269.1">
    <property type="nucleotide sequence ID" value="NC_002932.3"/>
</dbReference>
<dbReference type="RefSeq" id="WP_010933050.1">
    <property type="nucleotide sequence ID" value="NC_002932.3"/>
</dbReference>
<dbReference type="STRING" id="194439.CT1382"/>
<dbReference type="EnsemblBacteria" id="AAM72611">
    <property type="protein sequence ID" value="AAM72611"/>
    <property type="gene ID" value="CT1382"/>
</dbReference>
<dbReference type="KEGG" id="cte:CT1382"/>
<dbReference type="PATRIC" id="fig|194439.7.peg.1256"/>
<dbReference type="eggNOG" id="COG0633">
    <property type="taxonomic scope" value="Bacteria"/>
</dbReference>
<dbReference type="HOGENOM" id="CLU_1265952_0_0_10"/>
<dbReference type="OrthoDB" id="9799640at2"/>
<dbReference type="Proteomes" id="UP000001007">
    <property type="component" value="Chromosome"/>
</dbReference>
<dbReference type="GO" id="GO:0046858">
    <property type="term" value="C:chlorosome"/>
    <property type="evidence" value="ECO:0007669"/>
    <property type="project" value="UniProtKB-SubCell"/>
</dbReference>
<dbReference type="GO" id="GO:0051537">
    <property type="term" value="F:2 iron, 2 sulfur cluster binding"/>
    <property type="evidence" value="ECO:0007669"/>
    <property type="project" value="UniProtKB-KW"/>
</dbReference>
<dbReference type="GO" id="GO:0046872">
    <property type="term" value="F:metal ion binding"/>
    <property type="evidence" value="ECO:0007669"/>
    <property type="project" value="UniProtKB-KW"/>
</dbReference>
<dbReference type="GO" id="GO:0015979">
    <property type="term" value="P:photosynthesis"/>
    <property type="evidence" value="ECO:0007669"/>
    <property type="project" value="UniProtKB-KW"/>
</dbReference>
<dbReference type="Gene3D" id="3.10.20.30">
    <property type="match status" value="1"/>
</dbReference>
<dbReference type="InterPro" id="IPR036010">
    <property type="entry name" value="2Fe-2S_ferredoxin-like_sf"/>
</dbReference>
<dbReference type="InterPro" id="IPR001041">
    <property type="entry name" value="2Fe-2S_ferredoxin-type"/>
</dbReference>
<dbReference type="InterPro" id="IPR012675">
    <property type="entry name" value="Beta-grasp_dom_sf"/>
</dbReference>
<dbReference type="Pfam" id="PF00111">
    <property type="entry name" value="Fer2"/>
    <property type="match status" value="1"/>
</dbReference>
<dbReference type="SUPFAM" id="SSF54292">
    <property type="entry name" value="2Fe-2S ferredoxin-like"/>
    <property type="match status" value="1"/>
</dbReference>
<dbReference type="PROSITE" id="PS51085">
    <property type="entry name" value="2FE2S_FER_2"/>
    <property type="match status" value="1"/>
</dbReference>
<evidence type="ECO:0000255" key="1">
    <source>
        <dbReference type="PROSITE-ProRule" id="PRU00465"/>
    </source>
</evidence>
<proteinExistence type="evidence at protein level"/>
<comment type="function">
    <text>Could play a direct role in the oxidation or reduction of the quenching species formed in the chlorosome.</text>
</comment>
<comment type="cofactor">
    <cofactor>
        <name>[2Fe-2S] cluster</name>
        <dbReference type="ChEBI" id="CHEBI:190135"/>
    </cofactor>
    <text>Binds 1 [2Fe-2S] cluster per subunit.</text>
</comment>
<comment type="subcellular location">
    <subcellularLocation>
        <location>Chlorosome</location>
    </subcellularLocation>
</comment>
<sequence>MNLIINDKTASSSVGQTIGKAARLNHAHVGYVCGGHGLCQACYITVQEGADCLAPLTDVEKAFLSPRQIAAGGRIACQATIAKEGTVKVLSRPEEVRRMVFSNPFQLIGYAADMGKDTAQQIVPGVQNLIGRIQRGEMGGKDALGDMIESIQGAAGLVVEAIQQGPMALPIPFKEQIADLISKLPLPQIQLPSISLPQLPSISFPQLPFSLPKLPFSLPFLPQQPQATASLEKVTITVQPPAKD</sequence>
<keyword id="KW-0001">2Fe-2S</keyword>
<keyword id="KW-0151">Chlorosome</keyword>
<keyword id="KW-0903">Direct protein sequencing</keyword>
<keyword id="KW-0249">Electron transport</keyword>
<keyword id="KW-0408">Iron</keyword>
<keyword id="KW-0411">Iron-sulfur</keyword>
<keyword id="KW-0479">Metal-binding</keyword>
<keyword id="KW-0602">Photosynthesis</keyword>
<keyword id="KW-1185">Reference proteome</keyword>
<keyword id="KW-0813">Transport</keyword>
<accession>O68988</accession>
<gene>
    <name type="primary">csmI</name>
    <name type="ordered locus">CT1382</name>
</gene>
<feature type="chain" id="PRO_0000189396" description="Chlorosome protein I">
    <location>
        <begin position="1"/>
        <end position="244"/>
    </location>
</feature>
<feature type="domain" description="2Fe-2S ferredoxin-type" evidence="1">
    <location>
        <begin position="1"/>
        <end position="95"/>
    </location>
</feature>
<feature type="binding site" evidence="1">
    <location>
        <position position="33"/>
    </location>
    <ligand>
        <name>[2Fe-2S] cluster</name>
        <dbReference type="ChEBI" id="CHEBI:190135"/>
    </ligand>
</feature>
<feature type="binding site" evidence="1">
    <location>
        <position position="39"/>
    </location>
    <ligand>
        <name>[2Fe-2S] cluster</name>
        <dbReference type="ChEBI" id="CHEBI:190135"/>
    </ligand>
</feature>
<feature type="binding site" evidence="1">
    <location>
        <position position="42"/>
    </location>
    <ligand>
        <name>[2Fe-2S] cluster</name>
        <dbReference type="ChEBI" id="CHEBI:190135"/>
    </ligand>
</feature>
<feature type="binding site" evidence="1">
    <location>
        <position position="77"/>
    </location>
    <ligand>
        <name>[2Fe-2S] cluster</name>
        <dbReference type="ChEBI" id="CHEBI:190135"/>
    </ligand>
</feature>
<reference key="1">
    <citation type="journal article" date="2001" name="Biochemistry">
        <title>Electron transfer may occur in the chlorosome envelope: the CsmI and CsmJ proteins of chlorosomes are 2Fe-2S ferredoxins.</title>
        <authorList>
            <person name="Vassilieva E.V."/>
            <person name="Antonkine M.L."/>
            <person name="Zybailov B.L."/>
            <person name="Yang F."/>
            <person name="Jakobs C.U."/>
            <person name="Golbeck J.H."/>
            <person name="Bryant D.A."/>
        </authorList>
    </citation>
    <scope>NUCLEOTIDE SEQUENCE [GENOMIC DNA]</scope>
</reference>
<reference key="2">
    <citation type="journal article" date="2002" name="Proc. Natl. Acad. Sci. U.S.A.">
        <title>The complete genome sequence of Chlorobium tepidum TLS, a photosynthetic, anaerobic, green-sulfur bacterium.</title>
        <authorList>
            <person name="Eisen J.A."/>
            <person name="Nelson K.E."/>
            <person name="Paulsen I.T."/>
            <person name="Heidelberg J.F."/>
            <person name="Wu M."/>
            <person name="Dodson R.J."/>
            <person name="DeBoy R.T."/>
            <person name="Gwinn M.L."/>
            <person name="Nelson W.C."/>
            <person name="Haft D.H."/>
            <person name="Hickey E.K."/>
            <person name="Peterson J.D."/>
            <person name="Durkin A.S."/>
            <person name="Kolonay J.F."/>
            <person name="Yang F."/>
            <person name="Holt I.E."/>
            <person name="Umayam L.A."/>
            <person name="Mason T.M."/>
            <person name="Brenner M."/>
            <person name="Shea T.P."/>
            <person name="Parksey D.S."/>
            <person name="Nierman W.C."/>
            <person name="Feldblyum T.V."/>
            <person name="Hansen C.L."/>
            <person name="Craven M.B."/>
            <person name="Radune D."/>
            <person name="Vamathevan J.J."/>
            <person name="Khouri H.M."/>
            <person name="White O."/>
            <person name="Gruber T.M."/>
            <person name="Ketchum K.A."/>
            <person name="Venter J.C."/>
            <person name="Tettelin H."/>
            <person name="Bryant D.A."/>
            <person name="Fraser C.M."/>
        </authorList>
    </citation>
    <scope>NUCLEOTIDE SEQUENCE [LARGE SCALE GENOMIC DNA]</scope>
    <source>
        <strain>ATCC 49652 / DSM 12025 / NBRC 103806 / TLS</strain>
    </source>
</reference>
<reference key="3">
    <citation type="journal article" date="1994" name="Photosyn. Res.">
        <title>Genes encoding two chlorosome components from the green sulfur bacteria Chlorobium vibrioforme strain 8327D and Chlorobium tepidum.</title>
        <authorList>
            <person name="Chung S."/>
            <person name="Frank G."/>
            <person name="Zuber H."/>
            <person name="Bryant D.A."/>
        </authorList>
    </citation>
    <scope>PARTIAL PROTEIN SEQUENCE</scope>
</reference>